<protein>
    <recommendedName>
        <fullName evidence="1">Aspartyl/glutamyl-tRNA(Asn/Gln) amidotransferase subunit B</fullName>
        <shortName evidence="1">Asp/Glu-ADT subunit B</shortName>
        <ecNumber evidence="1">6.3.5.-</ecNumber>
    </recommendedName>
</protein>
<evidence type="ECO:0000255" key="1">
    <source>
        <dbReference type="HAMAP-Rule" id="MF_00121"/>
    </source>
</evidence>
<gene>
    <name evidence="1" type="primary">gatB</name>
    <name type="ordered locus">Noc_2014</name>
</gene>
<accession>Q3J9M1</accession>
<proteinExistence type="inferred from homology"/>
<reference key="1">
    <citation type="journal article" date="2006" name="Appl. Environ. Microbiol.">
        <title>Complete genome sequence of the marine, chemolithoautotrophic, ammonia-oxidizing bacterium Nitrosococcus oceani ATCC 19707.</title>
        <authorList>
            <person name="Klotz M.G."/>
            <person name="Arp D.J."/>
            <person name="Chain P.S.G."/>
            <person name="El-Sheikh A.F."/>
            <person name="Hauser L.J."/>
            <person name="Hommes N.G."/>
            <person name="Larimer F.W."/>
            <person name="Malfatti S.A."/>
            <person name="Norton J.M."/>
            <person name="Poret-Peterson A.T."/>
            <person name="Vergez L.M."/>
            <person name="Ward B.B."/>
        </authorList>
    </citation>
    <scope>NUCLEOTIDE SEQUENCE [LARGE SCALE GENOMIC DNA]</scope>
    <source>
        <strain>ATCC 19707 / BCRC 17464 / JCM 30415 / NCIMB 11848 / C-107</strain>
    </source>
</reference>
<organism>
    <name type="scientific">Nitrosococcus oceani (strain ATCC 19707 / BCRC 17464 / JCM 30415 / NCIMB 11848 / C-107)</name>
    <dbReference type="NCBI Taxonomy" id="323261"/>
    <lineage>
        <taxon>Bacteria</taxon>
        <taxon>Pseudomonadati</taxon>
        <taxon>Pseudomonadota</taxon>
        <taxon>Gammaproteobacteria</taxon>
        <taxon>Chromatiales</taxon>
        <taxon>Chromatiaceae</taxon>
        <taxon>Nitrosococcus</taxon>
    </lineage>
</organism>
<keyword id="KW-0067">ATP-binding</keyword>
<keyword id="KW-0436">Ligase</keyword>
<keyword id="KW-0547">Nucleotide-binding</keyword>
<keyword id="KW-0648">Protein biosynthesis</keyword>
<keyword id="KW-1185">Reference proteome</keyword>
<name>GATB_NITOC</name>
<sequence>MQWEPVIGLEIHAQLATKSKIFSGAATAYGAPPNTQACAVDLGLPGVLPVLNQAVVRMAVKFGLAIEAKIAKHSVFARKNYFYPDLPKGYQISQYELPIVADGHVIIELEDGVEKRIEIVRAHLEEDAGKSLHEDFHGMTGIDLNRAGTPLLEIVSGPDLRSTKEAVTYMKKIHTLVRYLGICDGNMQEGSFRCDANISIRPQGQETLGTRTELKNINSFRFVERALQYEIERQTEVLESGGQVLQETRLFDPAKNETRPMRTKEEATDYRYFPDPDLLPLVLEDSFIDEVRETLPELPDAKRKRFVMEYALSAYDASVLTASRELADYYEAVVKTADGEAKLSANWVMGDLAGALNKEGKSIADSPVSPEQLGQLIKRIADETISGKIAKTVFETMYAQGGKADEIIARQGLKQVTDTASIEKLIDEVLAANPQQVTQYQGGKDKLFGFFVGQVMKTSKGKANPQQLNELLKKKLS</sequence>
<feature type="chain" id="PRO_0000241246" description="Aspartyl/glutamyl-tRNA(Asn/Gln) amidotransferase subunit B">
    <location>
        <begin position="1"/>
        <end position="477"/>
    </location>
</feature>
<comment type="function">
    <text evidence="1">Allows the formation of correctly charged Asn-tRNA(Asn) or Gln-tRNA(Gln) through the transamidation of misacylated Asp-tRNA(Asn) or Glu-tRNA(Gln) in organisms which lack either or both of asparaginyl-tRNA or glutaminyl-tRNA synthetases. The reaction takes place in the presence of glutamine and ATP through an activated phospho-Asp-tRNA(Asn) or phospho-Glu-tRNA(Gln).</text>
</comment>
<comment type="catalytic activity">
    <reaction evidence="1">
        <text>L-glutamyl-tRNA(Gln) + L-glutamine + ATP + H2O = L-glutaminyl-tRNA(Gln) + L-glutamate + ADP + phosphate + H(+)</text>
        <dbReference type="Rhea" id="RHEA:17521"/>
        <dbReference type="Rhea" id="RHEA-COMP:9681"/>
        <dbReference type="Rhea" id="RHEA-COMP:9684"/>
        <dbReference type="ChEBI" id="CHEBI:15377"/>
        <dbReference type="ChEBI" id="CHEBI:15378"/>
        <dbReference type="ChEBI" id="CHEBI:29985"/>
        <dbReference type="ChEBI" id="CHEBI:30616"/>
        <dbReference type="ChEBI" id="CHEBI:43474"/>
        <dbReference type="ChEBI" id="CHEBI:58359"/>
        <dbReference type="ChEBI" id="CHEBI:78520"/>
        <dbReference type="ChEBI" id="CHEBI:78521"/>
        <dbReference type="ChEBI" id="CHEBI:456216"/>
    </reaction>
</comment>
<comment type="catalytic activity">
    <reaction evidence="1">
        <text>L-aspartyl-tRNA(Asn) + L-glutamine + ATP + H2O = L-asparaginyl-tRNA(Asn) + L-glutamate + ADP + phosphate + 2 H(+)</text>
        <dbReference type="Rhea" id="RHEA:14513"/>
        <dbReference type="Rhea" id="RHEA-COMP:9674"/>
        <dbReference type="Rhea" id="RHEA-COMP:9677"/>
        <dbReference type="ChEBI" id="CHEBI:15377"/>
        <dbReference type="ChEBI" id="CHEBI:15378"/>
        <dbReference type="ChEBI" id="CHEBI:29985"/>
        <dbReference type="ChEBI" id="CHEBI:30616"/>
        <dbReference type="ChEBI" id="CHEBI:43474"/>
        <dbReference type="ChEBI" id="CHEBI:58359"/>
        <dbReference type="ChEBI" id="CHEBI:78515"/>
        <dbReference type="ChEBI" id="CHEBI:78516"/>
        <dbReference type="ChEBI" id="CHEBI:456216"/>
    </reaction>
</comment>
<comment type="subunit">
    <text evidence="1">Heterotrimer of A, B and C subunits.</text>
</comment>
<comment type="similarity">
    <text evidence="1">Belongs to the GatB/GatE family. GatB subfamily.</text>
</comment>
<dbReference type="EC" id="6.3.5.-" evidence="1"/>
<dbReference type="EMBL" id="CP000127">
    <property type="protein sequence ID" value="ABA58475.1"/>
    <property type="molecule type" value="Genomic_DNA"/>
</dbReference>
<dbReference type="RefSeq" id="WP_002808624.1">
    <property type="nucleotide sequence ID" value="NC_007484.1"/>
</dbReference>
<dbReference type="SMR" id="Q3J9M1"/>
<dbReference type="STRING" id="323261.Noc_2014"/>
<dbReference type="KEGG" id="noc:Noc_2014"/>
<dbReference type="eggNOG" id="COG0064">
    <property type="taxonomic scope" value="Bacteria"/>
</dbReference>
<dbReference type="HOGENOM" id="CLU_019240_0_0_6"/>
<dbReference type="InParanoid" id="Q3J9M1"/>
<dbReference type="Proteomes" id="UP000006838">
    <property type="component" value="Chromosome"/>
</dbReference>
<dbReference type="GO" id="GO:0050566">
    <property type="term" value="F:asparaginyl-tRNA synthase (glutamine-hydrolyzing) activity"/>
    <property type="evidence" value="ECO:0007669"/>
    <property type="project" value="RHEA"/>
</dbReference>
<dbReference type="GO" id="GO:0005524">
    <property type="term" value="F:ATP binding"/>
    <property type="evidence" value="ECO:0007669"/>
    <property type="project" value="UniProtKB-KW"/>
</dbReference>
<dbReference type="GO" id="GO:0050567">
    <property type="term" value="F:glutaminyl-tRNA synthase (glutamine-hydrolyzing) activity"/>
    <property type="evidence" value="ECO:0007669"/>
    <property type="project" value="UniProtKB-UniRule"/>
</dbReference>
<dbReference type="GO" id="GO:0070681">
    <property type="term" value="P:glutaminyl-tRNAGln biosynthesis via transamidation"/>
    <property type="evidence" value="ECO:0007669"/>
    <property type="project" value="TreeGrafter"/>
</dbReference>
<dbReference type="GO" id="GO:0006412">
    <property type="term" value="P:translation"/>
    <property type="evidence" value="ECO:0007669"/>
    <property type="project" value="UniProtKB-UniRule"/>
</dbReference>
<dbReference type="FunFam" id="1.10.10.410:FF:000001">
    <property type="entry name" value="Aspartyl/glutamyl-tRNA(Asn/Gln) amidotransferase subunit B"/>
    <property type="match status" value="1"/>
</dbReference>
<dbReference type="FunFam" id="1.10.150.380:FF:000001">
    <property type="entry name" value="Aspartyl/glutamyl-tRNA(Asn/Gln) amidotransferase subunit B"/>
    <property type="match status" value="1"/>
</dbReference>
<dbReference type="Gene3D" id="1.10.10.410">
    <property type="match status" value="1"/>
</dbReference>
<dbReference type="Gene3D" id="1.10.150.380">
    <property type="entry name" value="GatB domain, N-terminal subdomain"/>
    <property type="match status" value="1"/>
</dbReference>
<dbReference type="HAMAP" id="MF_00121">
    <property type="entry name" value="GatB"/>
    <property type="match status" value="1"/>
</dbReference>
<dbReference type="InterPro" id="IPR017959">
    <property type="entry name" value="Asn/Gln-tRNA_amidoTrfase_suB/E"/>
</dbReference>
<dbReference type="InterPro" id="IPR006075">
    <property type="entry name" value="Asn/Gln-tRNA_Trfase_suB/E_cat"/>
</dbReference>
<dbReference type="InterPro" id="IPR018027">
    <property type="entry name" value="Asn/Gln_amidotransferase"/>
</dbReference>
<dbReference type="InterPro" id="IPR003789">
    <property type="entry name" value="Asn/Gln_tRNA_amidoTrase-B-like"/>
</dbReference>
<dbReference type="InterPro" id="IPR004413">
    <property type="entry name" value="GatB"/>
</dbReference>
<dbReference type="InterPro" id="IPR042114">
    <property type="entry name" value="GatB_C_1"/>
</dbReference>
<dbReference type="InterPro" id="IPR023168">
    <property type="entry name" value="GatB_Yqey_C_2"/>
</dbReference>
<dbReference type="InterPro" id="IPR017958">
    <property type="entry name" value="Gln-tRNA_amidoTrfase_suB_CS"/>
</dbReference>
<dbReference type="InterPro" id="IPR014746">
    <property type="entry name" value="Gln_synth/guanido_kin_cat_dom"/>
</dbReference>
<dbReference type="NCBIfam" id="TIGR00133">
    <property type="entry name" value="gatB"/>
    <property type="match status" value="1"/>
</dbReference>
<dbReference type="NCBIfam" id="NF004012">
    <property type="entry name" value="PRK05477.1-2"/>
    <property type="match status" value="1"/>
</dbReference>
<dbReference type="NCBIfam" id="NF004014">
    <property type="entry name" value="PRK05477.1-4"/>
    <property type="match status" value="1"/>
</dbReference>
<dbReference type="NCBIfam" id="NF004015">
    <property type="entry name" value="PRK05477.1-5"/>
    <property type="match status" value="1"/>
</dbReference>
<dbReference type="PANTHER" id="PTHR11659">
    <property type="entry name" value="GLUTAMYL-TRNA GLN AMIDOTRANSFERASE SUBUNIT B MITOCHONDRIAL AND PROKARYOTIC PET112-RELATED"/>
    <property type="match status" value="1"/>
</dbReference>
<dbReference type="PANTHER" id="PTHR11659:SF0">
    <property type="entry name" value="GLUTAMYL-TRNA(GLN) AMIDOTRANSFERASE SUBUNIT B, MITOCHONDRIAL"/>
    <property type="match status" value="1"/>
</dbReference>
<dbReference type="Pfam" id="PF02934">
    <property type="entry name" value="GatB_N"/>
    <property type="match status" value="1"/>
</dbReference>
<dbReference type="Pfam" id="PF02637">
    <property type="entry name" value="GatB_Yqey"/>
    <property type="match status" value="1"/>
</dbReference>
<dbReference type="SMART" id="SM00845">
    <property type="entry name" value="GatB_Yqey"/>
    <property type="match status" value="1"/>
</dbReference>
<dbReference type="SUPFAM" id="SSF89095">
    <property type="entry name" value="GatB/YqeY motif"/>
    <property type="match status" value="1"/>
</dbReference>
<dbReference type="SUPFAM" id="SSF55931">
    <property type="entry name" value="Glutamine synthetase/guanido kinase"/>
    <property type="match status" value="1"/>
</dbReference>
<dbReference type="PROSITE" id="PS01234">
    <property type="entry name" value="GATB"/>
    <property type="match status" value="1"/>
</dbReference>